<proteinExistence type="inferred from homology"/>
<gene>
    <name evidence="1" type="primary">argB</name>
    <name type="ordered locus">BF0197</name>
</gene>
<comment type="function">
    <text evidence="1">Catalyzes the ATP-dependent phosphorylation of N-acetyl-L-glutamate.</text>
</comment>
<comment type="catalytic activity">
    <reaction evidence="1">
        <text>N-acetyl-L-glutamate + ATP = N-acetyl-L-glutamyl 5-phosphate + ADP</text>
        <dbReference type="Rhea" id="RHEA:14629"/>
        <dbReference type="ChEBI" id="CHEBI:30616"/>
        <dbReference type="ChEBI" id="CHEBI:44337"/>
        <dbReference type="ChEBI" id="CHEBI:57936"/>
        <dbReference type="ChEBI" id="CHEBI:456216"/>
        <dbReference type="EC" id="2.7.2.8"/>
    </reaction>
</comment>
<comment type="pathway">
    <text evidence="1">Amino-acid biosynthesis; L-arginine biosynthesis; N(2)-acetyl-L-ornithine from L-glutamate: step 2/4.</text>
</comment>
<comment type="subcellular location">
    <subcellularLocation>
        <location evidence="1">Cytoplasm</location>
    </subcellularLocation>
</comment>
<comment type="similarity">
    <text evidence="1">Belongs to the acetylglutamate kinase family. ArgB subfamily.</text>
</comment>
<sequence>MKEKMKEKLTVIKVGGKIVEEEATLNQLLNDFAAIEGHKVLVHGGGRSATKIAAQLGIDSKMVNGRRITDAETLKVVTMVYGGLVNKNIVAGLQARGVNALGLTGADMNVIRSMKRPVKEVDYGFVGDVERVDSTLLSDLIHKGVVPVMAPLTHDGQGNMLNTNADTIAGETAKALSAIFDVTLVYCFEKKGVLRDENDDESVIPQINHAEFQRYIAEGVIQGGMIPKLENSFEAINAGVSEVVITLASAIHTDGGTRIKK</sequence>
<dbReference type="EC" id="2.7.2.8" evidence="1"/>
<dbReference type="EMBL" id="CR626927">
    <property type="protein sequence ID" value="CAH05974.1"/>
    <property type="molecule type" value="Genomic_DNA"/>
</dbReference>
<dbReference type="SMR" id="Q5LIQ2"/>
<dbReference type="PaxDb" id="272559-BF9343_0195"/>
<dbReference type="KEGG" id="bfs:BF9343_0195"/>
<dbReference type="eggNOG" id="COG0548">
    <property type="taxonomic scope" value="Bacteria"/>
</dbReference>
<dbReference type="HOGENOM" id="CLU_053680_1_0_10"/>
<dbReference type="UniPathway" id="UPA00068">
    <property type="reaction ID" value="UER00107"/>
</dbReference>
<dbReference type="Proteomes" id="UP000006731">
    <property type="component" value="Chromosome"/>
</dbReference>
<dbReference type="GO" id="GO:0005737">
    <property type="term" value="C:cytoplasm"/>
    <property type="evidence" value="ECO:0007669"/>
    <property type="project" value="UniProtKB-SubCell"/>
</dbReference>
<dbReference type="GO" id="GO:0003991">
    <property type="term" value="F:acetylglutamate kinase activity"/>
    <property type="evidence" value="ECO:0007669"/>
    <property type="project" value="UniProtKB-UniRule"/>
</dbReference>
<dbReference type="GO" id="GO:0005524">
    <property type="term" value="F:ATP binding"/>
    <property type="evidence" value="ECO:0007669"/>
    <property type="project" value="UniProtKB-UniRule"/>
</dbReference>
<dbReference type="GO" id="GO:0042450">
    <property type="term" value="P:arginine biosynthetic process via ornithine"/>
    <property type="evidence" value="ECO:0007669"/>
    <property type="project" value="UniProtKB-UniRule"/>
</dbReference>
<dbReference type="GO" id="GO:0006526">
    <property type="term" value="P:L-arginine biosynthetic process"/>
    <property type="evidence" value="ECO:0007669"/>
    <property type="project" value="UniProtKB-UniPathway"/>
</dbReference>
<dbReference type="CDD" id="cd04238">
    <property type="entry name" value="AAK_NAGK-like"/>
    <property type="match status" value="1"/>
</dbReference>
<dbReference type="Gene3D" id="3.40.1160.10">
    <property type="entry name" value="Acetylglutamate kinase-like"/>
    <property type="match status" value="1"/>
</dbReference>
<dbReference type="HAMAP" id="MF_00082">
    <property type="entry name" value="ArgB"/>
    <property type="match status" value="1"/>
</dbReference>
<dbReference type="InterPro" id="IPR036393">
    <property type="entry name" value="AceGlu_kinase-like_sf"/>
</dbReference>
<dbReference type="InterPro" id="IPR004662">
    <property type="entry name" value="AcgluKinase_fam"/>
</dbReference>
<dbReference type="InterPro" id="IPR037528">
    <property type="entry name" value="ArgB"/>
</dbReference>
<dbReference type="InterPro" id="IPR001048">
    <property type="entry name" value="Asp/Glu/Uridylate_kinase"/>
</dbReference>
<dbReference type="NCBIfam" id="TIGR00761">
    <property type="entry name" value="argB"/>
    <property type="match status" value="1"/>
</dbReference>
<dbReference type="PANTHER" id="PTHR23342">
    <property type="entry name" value="N-ACETYLGLUTAMATE SYNTHASE"/>
    <property type="match status" value="1"/>
</dbReference>
<dbReference type="PANTHER" id="PTHR23342:SF0">
    <property type="entry name" value="N-ACETYLGLUTAMATE SYNTHASE, MITOCHONDRIAL"/>
    <property type="match status" value="1"/>
</dbReference>
<dbReference type="Pfam" id="PF00696">
    <property type="entry name" value="AA_kinase"/>
    <property type="match status" value="1"/>
</dbReference>
<dbReference type="PIRSF" id="PIRSF000728">
    <property type="entry name" value="NAGK"/>
    <property type="match status" value="1"/>
</dbReference>
<dbReference type="SUPFAM" id="SSF53633">
    <property type="entry name" value="Carbamate kinase-like"/>
    <property type="match status" value="1"/>
</dbReference>
<accession>Q5LIQ2</accession>
<keyword id="KW-0028">Amino-acid biosynthesis</keyword>
<keyword id="KW-0055">Arginine biosynthesis</keyword>
<keyword id="KW-0067">ATP-binding</keyword>
<keyword id="KW-0963">Cytoplasm</keyword>
<keyword id="KW-0418">Kinase</keyword>
<keyword id="KW-0547">Nucleotide-binding</keyword>
<keyword id="KW-0808">Transferase</keyword>
<name>ARGB_BACFN</name>
<feature type="chain" id="PRO_0000264682" description="Acetylglutamate kinase">
    <location>
        <begin position="1"/>
        <end position="261"/>
    </location>
</feature>
<feature type="binding site" evidence="1">
    <location>
        <begin position="45"/>
        <end position="46"/>
    </location>
    <ligand>
        <name>substrate</name>
    </ligand>
</feature>
<feature type="binding site" evidence="1">
    <location>
        <position position="67"/>
    </location>
    <ligand>
        <name>substrate</name>
    </ligand>
</feature>
<feature type="binding site" evidence="1">
    <location>
        <position position="162"/>
    </location>
    <ligand>
        <name>substrate</name>
    </ligand>
</feature>
<feature type="site" description="Transition state stabilizer" evidence="1">
    <location>
        <position position="13"/>
    </location>
</feature>
<feature type="site" description="Transition state stabilizer" evidence="1">
    <location>
        <position position="228"/>
    </location>
</feature>
<protein>
    <recommendedName>
        <fullName evidence="1">Acetylglutamate kinase</fullName>
        <ecNumber evidence="1">2.7.2.8</ecNumber>
    </recommendedName>
    <alternativeName>
        <fullName evidence="1">N-acetyl-L-glutamate 5-phosphotransferase</fullName>
    </alternativeName>
    <alternativeName>
        <fullName evidence="1">NAG kinase</fullName>
        <shortName evidence="1">NAGK</shortName>
    </alternativeName>
</protein>
<reference key="1">
    <citation type="journal article" date="2005" name="Science">
        <title>Extensive DNA inversions in the B. fragilis genome control variable gene expression.</title>
        <authorList>
            <person name="Cerdeno-Tarraga A.-M."/>
            <person name="Patrick S."/>
            <person name="Crossman L.C."/>
            <person name="Blakely G."/>
            <person name="Abratt V."/>
            <person name="Lennard N."/>
            <person name="Poxton I."/>
            <person name="Duerden B."/>
            <person name="Harris B."/>
            <person name="Quail M.A."/>
            <person name="Barron A."/>
            <person name="Clark L."/>
            <person name="Corton C."/>
            <person name="Doggett J."/>
            <person name="Holden M.T.G."/>
            <person name="Larke N."/>
            <person name="Line A."/>
            <person name="Lord A."/>
            <person name="Norbertczak H."/>
            <person name="Ormond D."/>
            <person name="Price C."/>
            <person name="Rabbinowitsch E."/>
            <person name="Woodward J."/>
            <person name="Barrell B.G."/>
            <person name="Parkhill J."/>
        </authorList>
    </citation>
    <scope>NUCLEOTIDE SEQUENCE [LARGE SCALE GENOMIC DNA]</scope>
    <source>
        <strain>ATCC 25285 / DSM 2151 / CCUG 4856 / JCM 11019 / LMG 10263 / NCTC 9343 / Onslow / VPI 2553 / EN-2</strain>
    </source>
</reference>
<evidence type="ECO:0000255" key="1">
    <source>
        <dbReference type="HAMAP-Rule" id="MF_00082"/>
    </source>
</evidence>
<organism>
    <name type="scientific">Bacteroides fragilis (strain ATCC 25285 / DSM 2151 / CCUG 4856 / JCM 11019 / LMG 10263 / NCTC 9343 / Onslow / VPI 2553 / EN-2)</name>
    <dbReference type="NCBI Taxonomy" id="272559"/>
    <lineage>
        <taxon>Bacteria</taxon>
        <taxon>Pseudomonadati</taxon>
        <taxon>Bacteroidota</taxon>
        <taxon>Bacteroidia</taxon>
        <taxon>Bacteroidales</taxon>
        <taxon>Bacteroidaceae</taxon>
        <taxon>Bacteroides</taxon>
    </lineage>
</organism>